<name>THIG_SERP5</name>
<sequence length="259" mass="27277">MLQIADTTFTSRLFTGTGKFATPTLMLEALQASGSQLVTMAMKRVDLRGGNDAILAPLQQLGVRLLPNTSGAKTAAEAVFAARLAREALGTHWVKLEIHPDVKYLLPDPIETLKAAEILVKEGFVVLPYCGADPVLCKRLEEAGCAAVMPLGAPIGSNRGLRTRDFLEIIIEQARVPVVVDAGIGAPSHALEAMELGADAVLVNTAIAVARDPVQMARAFRLALEAGELARQAGLGSSQRNAVASSPLTAFLSQTGETL</sequence>
<evidence type="ECO:0000255" key="1">
    <source>
        <dbReference type="HAMAP-Rule" id="MF_00443"/>
    </source>
</evidence>
<proteinExistence type="inferred from homology"/>
<gene>
    <name evidence="1" type="primary">thiG</name>
    <name type="ordered locus">Spro_0280</name>
</gene>
<dbReference type="EC" id="2.8.1.10" evidence="1"/>
<dbReference type="EMBL" id="CP000826">
    <property type="protein sequence ID" value="ABV39390.1"/>
    <property type="molecule type" value="Genomic_DNA"/>
</dbReference>
<dbReference type="SMR" id="A8G8F0"/>
<dbReference type="STRING" id="399741.Spro_0280"/>
<dbReference type="KEGG" id="spe:Spro_0280"/>
<dbReference type="eggNOG" id="COG2022">
    <property type="taxonomic scope" value="Bacteria"/>
</dbReference>
<dbReference type="HOGENOM" id="CLU_062233_1_0_6"/>
<dbReference type="OrthoDB" id="9805935at2"/>
<dbReference type="UniPathway" id="UPA00060"/>
<dbReference type="GO" id="GO:0005737">
    <property type="term" value="C:cytoplasm"/>
    <property type="evidence" value="ECO:0007669"/>
    <property type="project" value="UniProtKB-SubCell"/>
</dbReference>
<dbReference type="GO" id="GO:1990107">
    <property type="term" value="F:thiazole synthase activity"/>
    <property type="evidence" value="ECO:0007669"/>
    <property type="project" value="UniProtKB-EC"/>
</dbReference>
<dbReference type="GO" id="GO:0009229">
    <property type="term" value="P:thiamine diphosphate biosynthetic process"/>
    <property type="evidence" value="ECO:0007669"/>
    <property type="project" value="UniProtKB-UniRule"/>
</dbReference>
<dbReference type="CDD" id="cd04728">
    <property type="entry name" value="ThiG"/>
    <property type="match status" value="1"/>
</dbReference>
<dbReference type="FunFam" id="3.20.20.70:FF:000049">
    <property type="entry name" value="Thiazole synthase"/>
    <property type="match status" value="1"/>
</dbReference>
<dbReference type="Gene3D" id="3.20.20.70">
    <property type="entry name" value="Aldolase class I"/>
    <property type="match status" value="1"/>
</dbReference>
<dbReference type="HAMAP" id="MF_00443">
    <property type="entry name" value="ThiG"/>
    <property type="match status" value="1"/>
</dbReference>
<dbReference type="InterPro" id="IPR013785">
    <property type="entry name" value="Aldolase_TIM"/>
</dbReference>
<dbReference type="InterPro" id="IPR033983">
    <property type="entry name" value="Thiazole_synthase_ThiG"/>
</dbReference>
<dbReference type="InterPro" id="IPR008867">
    <property type="entry name" value="ThiG"/>
</dbReference>
<dbReference type="PANTHER" id="PTHR34266">
    <property type="entry name" value="THIAZOLE SYNTHASE"/>
    <property type="match status" value="1"/>
</dbReference>
<dbReference type="PANTHER" id="PTHR34266:SF2">
    <property type="entry name" value="THIAZOLE SYNTHASE"/>
    <property type="match status" value="1"/>
</dbReference>
<dbReference type="Pfam" id="PF05690">
    <property type="entry name" value="ThiG"/>
    <property type="match status" value="1"/>
</dbReference>
<dbReference type="SUPFAM" id="SSF110399">
    <property type="entry name" value="ThiG-like"/>
    <property type="match status" value="1"/>
</dbReference>
<keyword id="KW-0963">Cytoplasm</keyword>
<keyword id="KW-0704">Schiff base</keyword>
<keyword id="KW-0784">Thiamine biosynthesis</keyword>
<keyword id="KW-0808">Transferase</keyword>
<organism>
    <name type="scientific">Serratia proteamaculans (strain 568)</name>
    <dbReference type="NCBI Taxonomy" id="399741"/>
    <lineage>
        <taxon>Bacteria</taxon>
        <taxon>Pseudomonadati</taxon>
        <taxon>Pseudomonadota</taxon>
        <taxon>Gammaproteobacteria</taxon>
        <taxon>Enterobacterales</taxon>
        <taxon>Yersiniaceae</taxon>
        <taxon>Serratia</taxon>
    </lineage>
</organism>
<feature type="chain" id="PRO_1000060253" description="Thiazole synthase">
    <location>
        <begin position="1"/>
        <end position="259"/>
    </location>
</feature>
<feature type="active site" description="Schiff-base intermediate with DXP" evidence="1">
    <location>
        <position position="95"/>
    </location>
</feature>
<feature type="binding site" evidence="1">
    <location>
        <position position="156"/>
    </location>
    <ligand>
        <name>1-deoxy-D-xylulose 5-phosphate</name>
        <dbReference type="ChEBI" id="CHEBI:57792"/>
    </ligand>
</feature>
<feature type="binding site" evidence="1">
    <location>
        <begin position="182"/>
        <end position="183"/>
    </location>
    <ligand>
        <name>1-deoxy-D-xylulose 5-phosphate</name>
        <dbReference type="ChEBI" id="CHEBI:57792"/>
    </ligand>
</feature>
<feature type="binding site" evidence="1">
    <location>
        <begin position="204"/>
        <end position="205"/>
    </location>
    <ligand>
        <name>1-deoxy-D-xylulose 5-phosphate</name>
        <dbReference type="ChEBI" id="CHEBI:57792"/>
    </ligand>
</feature>
<reference key="1">
    <citation type="submission" date="2007-09" db="EMBL/GenBank/DDBJ databases">
        <title>Complete sequence of chromosome of Serratia proteamaculans 568.</title>
        <authorList>
            <consortium name="US DOE Joint Genome Institute"/>
            <person name="Copeland A."/>
            <person name="Lucas S."/>
            <person name="Lapidus A."/>
            <person name="Barry K."/>
            <person name="Glavina del Rio T."/>
            <person name="Dalin E."/>
            <person name="Tice H."/>
            <person name="Pitluck S."/>
            <person name="Chain P."/>
            <person name="Malfatti S."/>
            <person name="Shin M."/>
            <person name="Vergez L."/>
            <person name="Schmutz J."/>
            <person name="Larimer F."/>
            <person name="Land M."/>
            <person name="Hauser L."/>
            <person name="Kyrpides N."/>
            <person name="Kim E."/>
            <person name="Taghavi S."/>
            <person name="Newman L."/>
            <person name="Vangronsveld J."/>
            <person name="van der Lelie D."/>
            <person name="Richardson P."/>
        </authorList>
    </citation>
    <scope>NUCLEOTIDE SEQUENCE [LARGE SCALE GENOMIC DNA]</scope>
    <source>
        <strain>568</strain>
    </source>
</reference>
<comment type="function">
    <text evidence="1">Catalyzes the rearrangement of 1-deoxy-D-xylulose 5-phosphate (DXP) to produce the thiazole phosphate moiety of thiamine. Sulfur is provided by the thiocarboxylate moiety of the carrier protein ThiS. In vitro, sulfur can be provided by H(2)S.</text>
</comment>
<comment type="catalytic activity">
    <reaction evidence="1">
        <text>[ThiS sulfur-carrier protein]-C-terminal-Gly-aminoethanethioate + 2-iminoacetate + 1-deoxy-D-xylulose 5-phosphate = [ThiS sulfur-carrier protein]-C-terminal Gly-Gly + 2-[(2R,5Z)-2-carboxy-4-methylthiazol-5(2H)-ylidene]ethyl phosphate + 2 H2O + H(+)</text>
        <dbReference type="Rhea" id="RHEA:26297"/>
        <dbReference type="Rhea" id="RHEA-COMP:12909"/>
        <dbReference type="Rhea" id="RHEA-COMP:19908"/>
        <dbReference type="ChEBI" id="CHEBI:15377"/>
        <dbReference type="ChEBI" id="CHEBI:15378"/>
        <dbReference type="ChEBI" id="CHEBI:57792"/>
        <dbReference type="ChEBI" id="CHEBI:62899"/>
        <dbReference type="ChEBI" id="CHEBI:77846"/>
        <dbReference type="ChEBI" id="CHEBI:90778"/>
        <dbReference type="ChEBI" id="CHEBI:232372"/>
        <dbReference type="EC" id="2.8.1.10"/>
    </reaction>
</comment>
<comment type="pathway">
    <text evidence="1">Cofactor biosynthesis; thiamine diphosphate biosynthesis.</text>
</comment>
<comment type="subunit">
    <text evidence="1">Homotetramer. Forms heterodimers with either ThiH or ThiS.</text>
</comment>
<comment type="subcellular location">
    <subcellularLocation>
        <location evidence="1">Cytoplasm</location>
    </subcellularLocation>
</comment>
<comment type="similarity">
    <text evidence="1">Belongs to the ThiG family.</text>
</comment>
<protein>
    <recommendedName>
        <fullName evidence="1">Thiazole synthase</fullName>
        <ecNumber evidence="1">2.8.1.10</ecNumber>
    </recommendedName>
</protein>
<accession>A8G8F0</accession>